<gene>
    <name evidence="6" type="primary">tacA3</name>
    <name evidence="5" type="synonym">a6</name>
    <name evidence="9" type="ordered locus">STM14_3505</name>
</gene>
<feature type="chain" id="PRO_0000461698" description="Antitoxin TacA3">
    <location>
        <begin position="1"/>
        <end position="96"/>
    </location>
</feature>
<feature type="region of interest" description="Neutralization domain" evidence="3">
    <location>
        <begin position="61"/>
        <end position="96"/>
    </location>
</feature>
<feature type="mutagenesis site" description="Decreased autorepression by TacA3-TacT3." evidence="4">
    <original>R</original>
    <variation>A</variation>
    <location>
        <position position="14"/>
    </location>
</feature>
<feature type="mutagenesis site" description="Decreased autorepression by TacA3-TacT3, complex no longer binds DNA." evidence="4">
    <original>R</original>
    <variation>A</variation>
    <location>
        <position position="18"/>
    </location>
</feature>
<feature type="mutagenesis site" description="Decreased autorepression by TacA3-TacT3; when associated with 'A-33' or 'E-33' in TacT3." evidence="4">
    <original>N</original>
    <variation>A</variation>
    <location>
        <position position="37"/>
    </location>
</feature>
<feature type="mutagenesis site" description="Loss of antitoxin neutralization ability." evidence="3">
    <location>
        <begin position="82"/>
        <end position="96"/>
    </location>
</feature>
<feature type="helix" evidence="12">
    <location>
        <begin position="21"/>
        <end position="33"/>
    </location>
</feature>
<feature type="helix" evidence="12">
    <location>
        <begin position="38"/>
        <end position="58"/>
    </location>
</feature>
<feature type="strand" evidence="12">
    <location>
        <begin position="59"/>
        <end position="61"/>
    </location>
</feature>
<feature type="helix" evidence="12">
    <location>
        <begin position="64"/>
        <end position="75"/>
    </location>
</feature>
<feature type="helix" evidence="12">
    <location>
        <begin position="82"/>
        <end position="90"/>
    </location>
</feature>
<keyword id="KW-0002">3D-structure</keyword>
<keyword id="KW-0238">DNA-binding</keyword>
<keyword id="KW-0678">Repressor</keyword>
<keyword id="KW-1277">Toxin-antitoxin system</keyword>
<keyword id="KW-0804">Transcription</keyword>
<keyword id="KW-0805">Transcription regulation</keyword>
<reference evidence="9" key="1">
    <citation type="journal article" date="2010" name="J. Bacteriol.">
        <title>Short-term signatures of evolutionary change in the Salmonella enterica serovar typhimurium 14028 genome.</title>
        <authorList>
            <person name="Jarvik T."/>
            <person name="Smillie C."/>
            <person name="Groisman E.A."/>
            <person name="Ochman H."/>
        </authorList>
    </citation>
    <scope>NUCLEOTIDE SEQUENCE [LARGE SCALE GENOMIC DNA]</scope>
    <source>
        <strain>14028s / SGSC 2262</strain>
    </source>
</reference>
<reference key="2">
    <citation type="journal article" date="2014" name="Science">
        <title>Internalization of Salmonella by macrophages induces formation of nonreplicating persisters.</title>
        <authorList>
            <person name="Helaine S."/>
            <person name="Cheverton A.M."/>
            <person name="Watson K.G."/>
            <person name="Faure L.M."/>
            <person name="Matthews S.A."/>
            <person name="Holden D.W."/>
        </authorList>
    </citation>
    <scope>OPERON FUNCTION IN PERSISTER CELL FORMATION</scope>
    <scope>INDUCTION IN HOST MACROPHAGES</scope>
    <scope>DISRUPTION PHENOTYPE</scope>
    <source>
        <strain>14028s / SGSC 2262</strain>
    </source>
</reference>
<reference key="3">
    <citation type="journal article" date="2018" name="Nat. Commun.">
        <title>Activity of acetyltransferase toxins involved in Salmonella persister formation during macrophage infection.</title>
        <authorList>
            <person name="Rycroft J.A."/>
            <person name="Gollan B."/>
            <person name="Grabe G.J."/>
            <person name="Hall A."/>
            <person name="Cheverton A.M."/>
            <person name="Larrouy-Maumus G."/>
            <person name="Hare S.A."/>
            <person name="Helaine S."/>
        </authorList>
    </citation>
    <scope>FUNCTION AS AN ANTITOXIN</scope>
    <scope>SUBUNIT</scope>
    <scope>DISRUPTION PHENOTYPE</scope>
    <source>
        <strain>14028s / SGSC 2262</strain>
    </source>
</reference>
<reference evidence="10" key="4">
    <citation type="journal article" date="2021" name="Nat. Chem. Biol.">
        <title>Auxiliary interfaces support the evolution of specific toxin-antitoxin pairing.</title>
        <authorList>
            <person name="Grabe G.J."/>
            <person name="Giorgio R.T."/>
            <person name="Hall A.M.J."/>
            <person name="Morgan R.M.L."/>
            <person name="Dubois L."/>
            <person name="Sisley T.A."/>
            <person name="Rycroft J.A."/>
            <person name="Hare S.A."/>
            <person name="Helaine S."/>
        </authorList>
    </citation>
    <scope>X-RAY CRYSTALLOGRAPHY (2.55 ANGSTROMS) OF 61-96 IN COMPLEX WITH TOXIN</scope>
    <scope>FUNCTION AS AN ANTITOXIN</scope>
    <scope>SUBUNIT</scope>
    <scope>DOMAIN</scope>
    <scope>MUTAGENESIS OF 82-GLU--LYS-96</scope>
    <source>
        <strain>14028s / SGSC 2262</strain>
    </source>
</reference>
<reference evidence="11" key="5">
    <citation type="journal article" date="2024" name="Nat. Struct. Mol. Biol.">
        <title>Molecular stripping underpins derepression of a toxin-antitoxin system.</title>
        <authorList>
            <person name="Grabe G.J."/>
            <person name="Giorgio R.T."/>
            <person name="Wieczor M."/>
            <person name="Gollan B."/>
            <person name="Sargen M."/>
            <person name="Orozco M."/>
            <person name="Hare S.A."/>
            <person name="Helaine S."/>
        </authorList>
    </citation>
    <scope>X-RAY CRYSTALLOGRAPHY (2.00 ANGSTROMS) OF 5-96 IN COMPLEX WITH TACT3 AND DNA</scope>
    <scope>FUNCTION</scope>
    <scope>SUBUNIT</scope>
    <scope>INDUCTION</scope>
    <scope>DNA-BINDING</scope>
    <scope>MUTAGENESIS OF ARG-14; ARG-18 AND ASN-37</scope>
</reference>
<proteinExistence type="evidence at protein level"/>
<comment type="function">
    <text evidence="1 2 3 4">Antitoxin component of a type II toxin-antitoxin (TA) system (PubMed:29777131, PubMed:34556858). Counteracts the toxic effect of cognate toxin TacT3, but not TacT1 or TacT2 (PubMed:29777131, PubMed:34556858). Plays a role in persister cell formation (PubMed:24408438).</text>
</comment>
<comment type="function">
    <text evidence="4 8">The TacA3-TacT3 complex both represses and derepresses expression of its own operon (PubMed:38538913). The hexameric 4:2 TacA3-TacT3 complex binds promoter DNA and represses its transcription; both subunits are required (PubMed:38538913). The octomeric 4:4 TacA3-TacT3 complex derepresses the operon (PubMed:38538913). The shift from hexameric to octomeric complex probably alters DNA-binding, leading to dissociation from the operator DNA and derepression (Probable) (PubMed:38538913). Does not bind the promoter of the TacA1-TacT1 operon (PubMed:38538913).</text>
</comment>
<comment type="subunit">
    <text evidence="2 3 4">Forms a complex with cognate toxin TacT3 (PubMed:29777131). Forms a 4:2 antitoxin:toxin complex with cognate toxin TacT3 (PubMed:34556858). Forms a 4:4 antitoxin:toxin complex with promoter DNA, where 2 TacT3 dimers bridge 2 TacA3 dimers (PubMed:38538913). Only TacA3 contacts promoter DNA (PubMed:38538913).</text>
</comment>
<comment type="induction">
    <text evidence="1 4">TacA3-TacT3 autorepresses its transcription at low TacT3 concentrations, at higher TacT3 levels it derepresses transcription (PubMed:38538913). The tacA3-tacT3 operon is up-regulated 5-fold in a relA-spoT-dependent manner within 30 minutes of phagocytosis by mouse bone marrow-derived macrophages (PubMed:24408438).</text>
</comment>
<comment type="domain">
    <text evidence="3">The neutralization domain (ND) is sufficient to counteract the toxic effect of its cognate toxin, although other regions also play a role.</text>
</comment>
<comment type="disruption phenotype">
    <text evidence="1 2">Deleting the operon causes 50% reduction in persister cell formation in mouse bone marrow-derived macrophages (PubMed:24408438). All 3 tacA-tacT operons can be deleted without an effect on growth in cell culture (PubMed:29777131).</text>
</comment>
<comment type="similarity">
    <text evidence="7">Belongs to the TacA antitoxin family.</text>
</comment>
<comment type="caution">
    <text evidence="7">It is uncertain whether Met-1 or Met-4 is the initiator.</text>
</comment>
<sequence length="96" mass="10679">MKTMPQIAIESNERLSLRVSTDAKKLIVRAAAIQQTNLTDFVVSNILPVAQKIVDAAERVYLTERDTKMIMEILDNPPAPNEKLLAAAFALPDMKK</sequence>
<organism>
    <name type="scientific">Salmonella typhimurium (strain 14028s / SGSC 2262)</name>
    <dbReference type="NCBI Taxonomy" id="588858"/>
    <lineage>
        <taxon>Bacteria</taxon>
        <taxon>Pseudomonadati</taxon>
        <taxon>Pseudomonadota</taxon>
        <taxon>Gammaproteobacteria</taxon>
        <taxon>Enterobacterales</taxon>
        <taxon>Enterobacteriaceae</taxon>
        <taxon>Salmonella</taxon>
    </lineage>
</organism>
<name>TACA3_SALT1</name>
<dbReference type="EMBL" id="CP001363">
    <property type="protein sequence ID" value="ACY89919.1"/>
    <property type="molecule type" value="Genomic_DNA"/>
</dbReference>
<dbReference type="RefSeq" id="WP_000855692.1">
    <property type="nucleotide sequence ID" value="NZ_CP043402.1"/>
</dbReference>
<dbReference type="PDB" id="7AK9">
    <property type="method" value="X-ray"/>
    <property type="resolution" value="2.55 A"/>
    <property type="chains" value="C/D=61-96"/>
</dbReference>
<dbReference type="PDB" id="7ZG5">
    <property type="method" value="X-ray"/>
    <property type="resolution" value="2.00 A"/>
    <property type="chains" value="C/D=5-96"/>
</dbReference>
<dbReference type="PDBsum" id="7AK9"/>
<dbReference type="PDBsum" id="7ZG5"/>
<dbReference type="SMR" id="A0A0F6B5X3"/>
<dbReference type="KEGG" id="seo:STM14_3505"/>
<dbReference type="PATRIC" id="fig|588858.6.peg.3222"/>
<dbReference type="HOGENOM" id="CLU_152494_3_2_6"/>
<dbReference type="BioCyc" id="SENT588858:STM14_RS15560-MONOMER"/>
<dbReference type="Proteomes" id="UP000002695">
    <property type="component" value="Chromosome"/>
</dbReference>
<dbReference type="GO" id="GO:0003677">
    <property type="term" value="F:DNA binding"/>
    <property type="evidence" value="ECO:0007669"/>
    <property type="project" value="UniProtKB-KW"/>
</dbReference>
<dbReference type="GO" id="GO:0006355">
    <property type="term" value="P:regulation of DNA-templated transcription"/>
    <property type="evidence" value="ECO:0007669"/>
    <property type="project" value="InterPro"/>
</dbReference>
<dbReference type="Gene3D" id="1.20.5.780">
    <property type="entry name" value="Single helix bin"/>
    <property type="match status" value="1"/>
</dbReference>
<dbReference type="InterPro" id="IPR010985">
    <property type="entry name" value="Ribbon_hlx_hlx"/>
</dbReference>
<dbReference type="InterPro" id="IPR014795">
    <property type="entry name" value="TacA_1-like"/>
</dbReference>
<dbReference type="PANTHER" id="PTHR35401:SF2">
    <property type="entry name" value="ABC-TYPE TRANSPORT SYSTEM"/>
    <property type="match status" value="1"/>
</dbReference>
<dbReference type="PANTHER" id="PTHR35401">
    <property type="entry name" value="COPG FAMILY HELIX-TURN-HELIX PROTEIN-RELATED-RELATED"/>
    <property type="match status" value="1"/>
</dbReference>
<dbReference type="Pfam" id="PF08681">
    <property type="entry name" value="TacA1"/>
    <property type="match status" value="1"/>
</dbReference>
<dbReference type="SUPFAM" id="SSF47598">
    <property type="entry name" value="Ribbon-helix-helix"/>
    <property type="match status" value="1"/>
</dbReference>
<accession>A0A0F6B5X3</accession>
<evidence type="ECO:0000269" key="1">
    <source>
    </source>
</evidence>
<evidence type="ECO:0000269" key="2">
    <source>
    </source>
</evidence>
<evidence type="ECO:0000269" key="3">
    <source>
    </source>
</evidence>
<evidence type="ECO:0000269" key="4">
    <source>
    </source>
</evidence>
<evidence type="ECO:0000303" key="5">
    <source>
    </source>
</evidence>
<evidence type="ECO:0000303" key="6">
    <source>
    </source>
</evidence>
<evidence type="ECO:0000305" key="7"/>
<evidence type="ECO:0000305" key="8">
    <source>
    </source>
</evidence>
<evidence type="ECO:0000312" key="9">
    <source>
        <dbReference type="EMBL" id="ACY89919.1"/>
    </source>
</evidence>
<evidence type="ECO:0007744" key="10">
    <source>
        <dbReference type="PDB" id="7AK9"/>
    </source>
</evidence>
<evidence type="ECO:0007744" key="11">
    <source>
        <dbReference type="PDB" id="7ZG5"/>
    </source>
</evidence>
<evidence type="ECO:0007829" key="12">
    <source>
        <dbReference type="PDB" id="7ZG5"/>
    </source>
</evidence>
<protein>
    <recommendedName>
        <fullName evidence="6">Antitoxin TacA3</fullName>
    </recommendedName>
    <alternativeName>
        <fullName evidence="5">Antitoxin A6</fullName>
    </alternativeName>
</protein>